<accession>Q8BYH7</accession>
<accession>Q3TCA5</accession>
<organism>
    <name type="scientific">Mus musculus</name>
    <name type="common">Mouse</name>
    <dbReference type="NCBI Taxonomy" id="10090"/>
    <lineage>
        <taxon>Eukaryota</taxon>
        <taxon>Metazoa</taxon>
        <taxon>Chordata</taxon>
        <taxon>Craniata</taxon>
        <taxon>Vertebrata</taxon>
        <taxon>Euteleostomi</taxon>
        <taxon>Mammalia</taxon>
        <taxon>Eutheria</taxon>
        <taxon>Euarchontoglires</taxon>
        <taxon>Glires</taxon>
        <taxon>Rodentia</taxon>
        <taxon>Myomorpha</taxon>
        <taxon>Muroidea</taxon>
        <taxon>Muridae</taxon>
        <taxon>Murinae</taxon>
        <taxon>Mus</taxon>
        <taxon>Mus</taxon>
    </lineage>
</organism>
<dbReference type="EMBL" id="AK136705">
    <property type="protein sequence ID" value="BAE23103.1"/>
    <property type="molecule type" value="mRNA"/>
</dbReference>
<dbReference type="EMBL" id="AK170821">
    <property type="protein sequence ID" value="BAE42052.1"/>
    <property type="molecule type" value="mRNA"/>
</dbReference>
<dbReference type="EMBL" id="AK039566">
    <property type="protein sequence ID" value="BAC30387.1"/>
    <property type="molecule type" value="mRNA"/>
</dbReference>
<dbReference type="EMBL" id="CH466603">
    <property type="protein sequence ID" value="EDL22756.1"/>
    <property type="molecule type" value="Genomic_DNA"/>
</dbReference>
<dbReference type="CCDS" id="CCDS39944.1"/>
<dbReference type="RefSeq" id="NP_001036120.1">
    <property type="nucleotide sequence ID" value="NM_001042655.2"/>
</dbReference>
<dbReference type="SMR" id="Q8BYH7"/>
<dbReference type="BioGRID" id="231386">
    <property type="interactions" value="29"/>
</dbReference>
<dbReference type="FunCoup" id="Q8BYH7">
    <property type="interactions" value="1420"/>
</dbReference>
<dbReference type="STRING" id="10090.ENSMUSP00000048260"/>
<dbReference type="iPTMnet" id="Q8BYH7"/>
<dbReference type="PhosphoSitePlus" id="Q8BYH7"/>
<dbReference type="PaxDb" id="10090-ENSMUSP00000048260"/>
<dbReference type="ProteomicsDB" id="254651"/>
<dbReference type="Pumba" id="Q8BYH7"/>
<dbReference type="Antibodypedia" id="62898">
    <property type="antibodies" value="22 antibodies from 11 providers"/>
</dbReference>
<dbReference type="Ensembl" id="ENSMUST00000047085.16">
    <property type="protein sequence ID" value="ENSMUSP00000048260.9"/>
    <property type="gene ID" value="ENSMUSG00000038520.16"/>
</dbReference>
<dbReference type="GeneID" id="233204"/>
<dbReference type="KEGG" id="mmu:233204"/>
<dbReference type="UCSC" id="uc009grc.1">
    <property type="organism name" value="mouse"/>
</dbReference>
<dbReference type="AGR" id="MGI:2449973"/>
<dbReference type="CTD" id="79735"/>
<dbReference type="MGI" id="MGI:2449973">
    <property type="gene designation" value="Tbc1d17"/>
</dbReference>
<dbReference type="VEuPathDB" id="HostDB:ENSMUSG00000038520"/>
<dbReference type="eggNOG" id="KOG2197">
    <property type="taxonomic scope" value="Eukaryota"/>
</dbReference>
<dbReference type="GeneTree" id="ENSGT00940000158989"/>
<dbReference type="HOGENOM" id="CLU_004457_2_2_1"/>
<dbReference type="InParanoid" id="Q8BYH7"/>
<dbReference type="OMA" id="CFAILME"/>
<dbReference type="OrthoDB" id="10264062at2759"/>
<dbReference type="PhylomeDB" id="Q8BYH7"/>
<dbReference type="TreeFam" id="TF314296"/>
<dbReference type="Reactome" id="R-MMU-8854214">
    <property type="pathway name" value="TBC/RABGAPs"/>
</dbReference>
<dbReference type="BioGRID-ORCS" id="233204">
    <property type="hits" value="5 hits in 77 CRISPR screens"/>
</dbReference>
<dbReference type="ChiTaRS" id="Tbc1d17">
    <property type="organism name" value="mouse"/>
</dbReference>
<dbReference type="PRO" id="PR:Q8BYH7"/>
<dbReference type="Proteomes" id="UP000000589">
    <property type="component" value="Chromosome 7"/>
</dbReference>
<dbReference type="RNAct" id="Q8BYH7">
    <property type="molecule type" value="protein"/>
</dbReference>
<dbReference type="Bgee" id="ENSMUSG00000038520">
    <property type="expression patterns" value="Expressed in hindlimb stylopod muscle and 249 other cell types or tissues"/>
</dbReference>
<dbReference type="ExpressionAtlas" id="Q8BYH7">
    <property type="expression patterns" value="baseline and differential"/>
</dbReference>
<dbReference type="GO" id="GO:0005776">
    <property type="term" value="C:autophagosome"/>
    <property type="evidence" value="ECO:0007669"/>
    <property type="project" value="UniProtKB-SubCell"/>
</dbReference>
<dbReference type="GO" id="GO:0005829">
    <property type="term" value="C:cytosol"/>
    <property type="evidence" value="ECO:0007669"/>
    <property type="project" value="Ensembl"/>
</dbReference>
<dbReference type="GO" id="GO:0055037">
    <property type="term" value="C:recycling endosome"/>
    <property type="evidence" value="ECO:0007669"/>
    <property type="project" value="UniProtKB-SubCell"/>
</dbReference>
<dbReference type="GO" id="GO:0005096">
    <property type="term" value="F:GTPase activator activity"/>
    <property type="evidence" value="ECO:0007669"/>
    <property type="project" value="UniProtKB-KW"/>
</dbReference>
<dbReference type="GO" id="GO:0006914">
    <property type="term" value="P:autophagy"/>
    <property type="evidence" value="ECO:0007669"/>
    <property type="project" value="UniProtKB-KW"/>
</dbReference>
<dbReference type="GO" id="GO:0015031">
    <property type="term" value="P:protein transport"/>
    <property type="evidence" value="ECO:0007669"/>
    <property type="project" value="UniProtKB-KW"/>
</dbReference>
<dbReference type="GO" id="GO:0042147">
    <property type="term" value="P:retrograde transport, endosome to Golgi"/>
    <property type="evidence" value="ECO:0007669"/>
    <property type="project" value="Ensembl"/>
</dbReference>
<dbReference type="FunFam" id="1.10.8.270:FF:000005">
    <property type="entry name" value="TBC1 domain family member 15"/>
    <property type="match status" value="1"/>
</dbReference>
<dbReference type="FunFam" id="1.10.472.80:FF:000036">
    <property type="entry name" value="TBC1 domain family member 17"/>
    <property type="match status" value="1"/>
</dbReference>
<dbReference type="Gene3D" id="1.10.8.270">
    <property type="entry name" value="putative rabgap domain of human tbc1 domain family member 14 like domains"/>
    <property type="match status" value="1"/>
</dbReference>
<dbReference type="Gene3D" id="1.10.472.80">
    <property type="entry name" value="Ypt/Rab-GAP domain of gyp1p, domain 3"/>
    <property type="match status" value="1"/>
</dbReference>
<dbReference type="InterPro" id="IPR000195">
    <property type="entry name" value="Rab-GAP-TBC_dom"/>
</dbReference>
<dbReference type="InterPro" id="IPR035969">
    <property type="entry name" value="Rab-GAP_TBC_sf"/>
</dbReference>
<dbReference type="InterPro" id="IPR021935">
    <property type="entry name" value="SGSM1/2_RBD"/>
</dbReference>
<dbReference type="PANTHER" id="PTHR22957:SF360">
    <property type="entry name" value="TBC1 DOMAIN FAMILY MEMBER 17"/>
    <property type="match status" value="1"/>
</dbReference>
<dbReference type="PANTHER" id="PTHR22957">
    <property type="entry name" value="TBC1 DOMAIN FAMILY MEMBER GTPASE-ACTIVATING PROTEIN"/>
    <property type="match status" value="1"/>
</dbReference>
<dbReference type="Pfam" id="PF12068">
    <property type="entry name" value="PH_RBD"/>
    <property type="match status" value="1"/>
</dbReference>
<dbReference type="Pfam" id="PF00566">
    <property type="entry name" value="RabGAP-TBC"/>
    <property type="match status" value="1"/>
</dbReference>
<dbReference type="SMART" id="SM00164">
    <property type="entry name" value="TBC"/>
    <property type="match status" value="1"/>
</dbReference>
<dbReference type="SUPFAM" id="SSF47923">
    <property type="entry name" value="Ypt/Rab-GAP domain of gyp1p"/>
    <property type="match status" value="2"/>
</dbReference>
<dbReference type="PROSITE" id="PS50086">
    <property type="entry name" value="TBC_RABGAP"/>
    <property type="match status" value="1"/>
</dbReference>
<evidence type="ECO:0000250" key="1"/>
<evidence type="ECO:0000250" key="2">
    <source>
        <dbReference type="UniProtKB" id="Q9HA65"/>
    </source>
</evidence>
<evidence type="ECO:0000255" key="3">
    <source>
        <dbReference type="PROSITE-ProRule" id="PRU00163"/>
    </source>
</evidence>
<evidence type="ECO:0000256" key="4">
    <source>
        <dbReference type="SAM" id="MobiDB-lite"/>
    </source>
</evidence>
<evidence type="ECO:0000305" key="5"/>
<comment type="function">
    <text evidence="2">Probable GTPase-activating protein that inhibits RAB8A/B function. Reduces Rab8 recruitment to tubules emanating from the endocytic recycling compartment (ERC) and inhibits Rab8-mediated endocytic trafficking, such as that of transferrin receptor (TfR). Involved in regulation of autophagy.</text>
</comment>
<comment type="subunit">
    <text evidence="2">Interacts with OPTN; this interaction mediates TBC1D17 transient association with Rab8.</text>
</comment>
<comment type="subcellular location">
    <subcellularLocation>
        <location evidence="2">Cytoplasmic vesicle</location>
        <location evidence="2">Autophagosome</location>
    </subcellularLocation>
    <subcellularLocation>
        <location evidence="2">Cytoplasm</location>
    </subcellularLocation>
    <subcellularLocation>
        <location evidence="2">Recycling endosome</location>
    </subcellularLocation>
    <text evidence="2">In the presence of optineurin/OPTN, may be recruited to recycling endosomes.</text>
</comment>
<comment type="domain">
    <text evidence="1">The arginine and glutamine fingers are critical for the GTPase-activating mechanism, they pull out Rab's 'switch 2' glutamine and insert in Rab's active site.</text>
</comment>
<sequence>MEGSSYRVVFEKGGVYLHTSARKHQDPDSLIAGVIRVVEKDSDVFLHWAPVEEAGDPTQILFKKDPSRGEPSTSEEEPTFDPGYEPDWAVISTVRPQPHLAEPRKGAEPSSSRSSWAFSVSLGELKSIRRSKPGLSWAYLVLVTQAGGSLPALHFHRGGTRALLRVLSRYLLLASSPQDSRLYLVFPQDPSALSDSFHHLQLFDQDSSNVVSRFLQDPYSTTFSSFSRVTNFFRGALQPHPEGASSPNLPPLPDDEPEPGFEVISCVELGQRPTVERAPPVTEEEWNRYVGPEGRLQNVPELKNRIFSGGLSPGLRREAWKFLLGYLSWESSAEEHKAHVRKKTDEYFRMKLQWKSVSAEQERRNSLLHGYRSLIERDVSRTDRTNKFYEGPENPGLSLLHDILLTYCMYHFDLGYVQGMSDLLSPILFVVQNEVDAFWCFCGFMELVHGNFEESQETMKRQLGQLLLLLRVLDQPLCDFLDSQDSGSLCFCFRWLLIWFKREFPFPDVLRLWEVLWTGLPGPNLHLLVACAILDMERDTLMLSGFGSNEILKHINELTMKLSVEDVLTRAEALYRQLTACPELPHNVQEILGLAQPEEPSSPSPPVSPMPLSPTRAPLPPPLPEEVIPQPDSSLEILPEDEDGA</sequence>
<protein>
    <recommendedName>
        <fullName>TBC1 domain family member 17</fullName>
    </recommendedName>
</protein>
<gene>
    <name type="primary">Tbc1d17</name>
</gene>
<name>TBC17_MOUSE</name>
<keyword id="KW-0072">Autophagy</keyword>
<keyword id="KW-0963">Cytoplasm</keyword>
<keyword id="KW-0968">Cytoplasmic vesicle</keyword>
<keyword id="KW-0967">Endosome</keyword>
<keyword id="KW-0343">GTPase activation</keyword>
<keyword id="KW-0597">Phosphoprotein</keyword>
<keyword id="KW-0653">Protein transport</keyword>
<keyword id="KW-1185">Reference proteome</keyword>
<keyword id="KW-0813">Transport</keyword>
<feature type="chain" id="PRO_0000208046" description="TBC1 domain family member 17">
    <location>
        <begin position="1"/>
        <end position="645"/>
    </location>
</feature>
<feature type="domain" description="Rab-GAP TBC" evidence="3">
    <location>
        <begin position="310"/>
        <end position="520"/>
    </location>
</feature>
<feature type="region of interest" description="Disordered" evidence="4">
    <location>
        <begin position="57"/>
        <end position="85"/>
    </location>
</feature>
<feature type="region of interest" description="Required for interaction with OPTN" evidence="1">
    <location>
        <begin position="217"/>
        <end position="309"/>
    </location>
</feature>
<feature type="region of interest" description="Disordered" evidence="4">
    <location>
        <begin position="596"/>
        <end position="645"/>
    </location>
</feature>
<feature type="compositionally biased region" description="Pro residues" evidence="4">
    <location>
        <begin position="600"/>
        <end position="624"/>
    </location>
</feature>
<feature type="site" description="Arginine finger" evidence="1">
    <location>
        <position position="377"/>
    </location>
</feature>
<feature type="site" description="Glutamine finger" evidence="1">
    <location>
        <position position="418"/>
    </location>
</feature>
<feature type="modified residue" description="Phosphoserine" evidence="2">
    <location>
        <position position="602"/>
    </location>
</feature>
<feature type="modified residue" description="Phosphoserine" evidence="2">
    <location>
        <position position="604"/>
    </location>
</feature>
<feature type="modified residue" description="Phosphoserine" evidence="2">
    <location>
        <position position="608"/>
    </location>
</feature>
<feature type="modified residue" description="Phosphothreonine" evidence="2">
    <location>
        <position position="615"/>
    </location>
</feature>
<feature type="sequence conflict" description="In Ref. 1; BAC30387." evidence="5" ref="1">
    <original>E</original>
    <variation>Q</variation>
    <location>
        <position position="75"/>
    </location>
</feature>
<feature type="sequence conflict" description="In Ref. 1; BAC30387." evidence="5" ref="1">
    <original>S</original>
    <variation>F</variation>
    <location>
        <position position="608"/>
    </location>
</feature>
<proteinExistence type="evidence at protein level"/>
<reference key="1">
    <citation type="journal article" date="2005" name="Science">
        <title>The transcriptional landscape of the mammalian genome.</title>
        <authorList>
            <person name="Carninci P."/>
            <person name="Kasukawa T."/>
            <person name="Katayama S."/>
            <person name="Gough J."/>
            <person name="Frith M.C."/>
            <person name="Maeda N."/>
            <person name="Oyama R."/>
            <person name="Ravasi T."/>
            <person name="Lenhard B."/>
            <person name="Wells C."/>
            <person name="Kodzius R."/>
            <person name="Shimokawa K."/>
            <person name="Bajic V.B."/>
            <person name="Brenner S.E."/>
            <person name="Batalov S."/>
            <person name="Forrest A.R."/>
            <person name="Zavolan M."/>
            <person name="Davis M.J."/>
            <person name="Wilming L.G."/>
            <person name="Aidinis V."/>
            <person name="Allen J.E."/>
            <person name="Ambesi-Impiombato A."/>
            <person name="Apweiler R."/>
            <person name="Aturaliya R.N."/>
            <person name="Bailey T.L."/>
            <person name="Bansal M."/>
            <person name="Baxter L."/>
            <person name="Beisel K.W."/>
            <person name="Bersano T."/>
            <person name="Bono H."/>
            <person name="Chalk A.M."/>
            <person name="Chiu K.P."/>
            <person name="Choudhary V."/>
            <person name="Christoffels A."/>
            <person name="Clutterbuck D.R."/>
            <person name="Crowe M.L."/>
            <person name="Dalla E."/>
            <person name="Dalrymple B.P."/>
            <person name="de Bono B."/>
            <person name="Della Gatta G."/>
            <person name="di Bernardo D."/>
            <person name="Down T."/>
            <person name="Engstrom P."/>
            <person name="Fagiolini M."/>
            <person name="Faulkner G."/>
            <person name="Fletcher C.F."/>
            <person name="Fukushima T."/>
            <person name="Furuno M."/>
            <person name="Futaki S."/>
            <person name="Gariboldi M."/>
            <person name="Georgii-Hemming P."/>
            <person name="Gingeras T.R."/>
            <person name="Gojobori T."/>
            <person name="Green R.E."/>
            <person name="Gustincich S."/>
            <person name="Harbers M."/>
            <person name="Hayashi Y."/>
            <person name="Hensch T.K."/>
            <person name="Hirokawa N."/>
            <person name="Hill D."/>
            <person name="Huminiecki L."/>
            <person name="Iacono M."/>
            <person name="Ikeo K."/>
            <person name="Iwama A."/>
            <person name="Ishikawa T."/>
            <person name="Jakt M."/>
            <person name="Kanapin A."/>
            <person name="Katoh M."/>
            <person name="Kawasawa Y."/>
            <person name="Kelso J."/>
            <person name="Kitamura H."/>
            <person name="Kitano H."/>
            <person name="Kollias G."/>
            <person name="Krishnan S.P."/>
            <person name="Kruger A."/>
            <person name="Kummerfeld S.K."/>
            <person name="Kurochkin I.V."/>
            <person name="Lareau L.F."/>
            <person name="Lazarevic D."/>
            <person name="Lipovich L."/>
            <person name="Liu J."/>
            <person name="Liuni S."/>
            <person name="McWilliam S."/>
            <person name="Madan Babu M."/>
            <person name="Madera M."/>
            <person name="Marchionni L."/>
            <person name="Matsuda H."/>
            <person name="Matsuzawa S."/>
            <person name="Miki H."/>
            <person name="Mignone F."/>
            <person name="Miyake S."/>
            <person name="Morris K."/>
            <person name="Mottagui-Tabar S."/>
            <person name="Mulder N."/>
            <person name="Nakano N."/>
            <person name="Nakauchi H."/>
            <person name="Ng P."/>
            <person name="Nilsson R."/>
            <person name="Nishiguchi S."/>
            <person name="Nishikawa S."/>
            <person name="Nori F."/>
            <person name="Ohara O."/>
            <person name="Okazaki Y."/>
            <person name="Orlando V."/>
            <person name="Pang K.C."/>
            <person name="Pavan W.J."/>
            <person name="Pavesi G."/>
            <person name="Pesole G."/>
            <person name="Petrovsky N."/>
            <person name="Piazza S."/>
            <person name="Reed J."/>
            <person name="Reid J.F."/>
            <person name="Ring B.Z."/>
            <person name="Ringwald M."/>
            <person name="Rost B."/>
            <person name="Ruan Y."/>
            <person name="Salzberg S.L."/>
            <person name="Sandelin A."/>
            <person name="Schneider C."/>
            <person name="Schoenbach C."/>
            <person name="Sekiguchi K."/>
            <person name="Semple C.A."/>
            <person name="Seno S."/>
            <person name="Sessa L."/>
            <person name="Sheng Y."/>
            <person name="Shibata Y."/>
            <person name="Shimada H."/>
            <person name="Shimada K."/>
            <person name="Silva D."/>
            <person name="Sinclair B."/>
            <person name="Sperling S."/>
            <person name="Stupka E."/>
            <person name="Sugiura K."/>
            <person name="Sultana R."/>
            <person name="Takenaka Y."/>
            <person name="Taki K."/>
            <person name="Tammoja K."/>
            <person name="Tan S.L."/>
            <person name="Tang S."/>
            <person name="Taylor M.S."/>
            <person name="Tegner J."/>
            <person name="Teichmann S.A."/>
            <person name="Ueda H.R."/>
            <person name="van Nimwegen E."/>
            <person name="Verardo R."/>
            <person name="Wei C.L."/>
            <person name="Yagi K."/>
            <person name="Yamanishi H."/>
            <person name="Zabarovsky E."/>
            <person name="Zhu S."/>
            <person name="Zimmer A."/>
            <person name="Hide W."/>
            <person name="Bult C."/>
            <person name="Grimmond S.M."/>
            <person name="Teasdale R.D."/>
            <person name="Liu E.T."/>
            <person name="Brusic V."/>
            <person name="Quackenbush J."/>
            <person name="Wahlestedt C."/>
            <person name="Mattick J.S."/>
            <person name="Hume D.A."/>
            <person name="Kai C."/>
            <person name="Sasaki D."/>
            <person name="Tomaru Y."/>
            <person name="Fukuda S."/>
            <person name="Kanamori-Katayama M."/>
            <person name="Suzuki M."/>
            <person name="Aoki J."/>
            <person name="Arakawa T."/>
            <person name="Iida J."/>
            <person name="Imamura K."/>
            <person name="Itoh M."/>
            <person name="Kato T."/>
            <person name="Kawaji H."/>
            <person name="Kawagashira N."/>
            <person name="Kawashima T."/>
            <person name="Kojima M."/>
            <person name="Kondo S."/>
            <person name="Konno H."/>
            <person name="Nakano K."/>
            <person name="Ninomiya N."/>
            <person name="Nishio T."/>
            <person name="Okada M."/>
            <person name="Plessy C."/>
            <person name="Shibata K."/>
            <person name="Shiraki T."/>
            <person name="Suzuki S."/>
            <person name="Tagami M."/>
            <person name="Waki K."/>
            <person name="Watahiki A."/>
            <person name="Okamura-Oho Y."/>
            <person name="Suzuki H."/>
            <person name="Kawai J."/>
            <person name="Hayashizaki Y."/>
        </authorList>
    </citation>
    <scope>NUCLEOTIDE SEQUENCE [LARGE SCALE MRNA]</scope>
    <source>
        <strain>C57BL/6J</strain>
        <strain>NOD</strain>
        <tissue>Epididymis</tissue>
        <tissue>Spinal cord</tissue>
    </source>
</reference>
<reference key="2">
    <citation type="submission" date="2005-07" db="EMBL/GenBank/DDBJ databases">
        <authorList>
            <person name="Mural R.J."/>
            <person name="Adams M.D."/>
            <person name="Myers E.W."/>
            <person name="Smith H.O."/>
            <person name="Venter J.C."/>
        </authorList>
    </citation>
    <scope>NUCLEOTIDE SEQUENCE [LARGE SCALE GENOMIC DNA]</scope>
</reference>
<reference key="3">
    <citation type="journal article" date="2010" name="Cell">
        <title>A tissue-specific atlas of mouse protein phosphorylation and expression.</title>
        <authorList>
            <person name="Huttlin E.L."/>
            <person name="Jedrychowski M.P."/>
            <person name="Elias J.E."/>
            <person name="Goswami T."/>
            <person name="Rad R."/>
            <person name="Beausoleil S.A."/>
            <person name="Villen J."/>
            <person name="Haas W."/>
            <person name="Sowa M.E."/>
            <person name="Gygi S.P."/>
        </authorList>
    </citation>
    <scope>IDENTIFICATION BY MASS SPECTROMETRY [LARGE SCALE ANALYSIS]</scope>
    <source>
        <tissue>Brain</tissue>
        <tissue>Brown adipose tissue</tissue>
        <tissue>Kidney</tissue>
        <tissue>Liver</tissue>
        <tissue>Lung</tissue>
        <tissue>Pancreas</tissue>
        <tissue>Spleen</tissue>
        <tissue>Testis</tissue>
    </source>
</reference>